<name>HSSR_STAAS</name>
<keyword id="KW-0010">Activator</keyword>
<keyword id="KW-0963">Cytoplasm</keyword>
<keyword id="KW-0238">DNA-binding</keyword>
<keyword id="KW-0597">Phosphoprotein</keyword>
<keyword id="KW-0804">Transcription</keyword>
<keyword id="KW-0805">Transcription regulation</keyword>
<keyword id="KW-0902">Two-component regulatory system</keyword>
<keyword id="KW-0843">Virulence</keyword>
<accession>Q6G6V9</accession>
<gene>
    <name type="primary">hssR</name>
    <name type="ordered locus">SAS2252</name>
</gene>
<reference key="1">
    <citation type="journal article" date="2004" name="Proc. Natl. Acad. Sci. U.S.A.">
        <title>Complete genomes of two clinical Staphylococcus aureus strains: evidence for the rapid evolution of virulence and drug resistance.</title>
        <authorList>
            <person name="Holden M.T.G."/>
            <person name="Feil E.J."/>
            <person name="Lindsay J.A."/>
            <person name="Peacock S.J."/>
            <person name="Day N.P.J."/>
            <person name="Enright M.C."/>
            <person name="Foster T.J."/>
            <person name="Moore C.E."/>
            <person name="Hurst L."/>
            <person name="Atkin R."/>
            <person name="Barron A."/>
            <person name="Bason N."/>
            <person name="Bentley S.D."/>
            <person name="Chillingworth C."/>
            <person name="Chillingworth T."/>
            <person name="Churcher C."/>
            <person name="Clark L."/>
            <person name="Corton C."/>
            <person name="Cronin A."/>
            <person name="Doggett J."/>
            <person name="Dowd L."/>
            <person name="Feltwell T."/>
            <person name="Hance Z."/>
            <person name="Harris B."/>
            <person name="Hauser H."/>
            <person name="Holroyd S."/>
            <person name="Jagels K."/>
            <person name="James K.D."/>
            <person name="Lennard N."/>
            <person name="Line A."/>
            <person name="Mayes R."/>
            <person name="Moule S."/>
            <person name="Mungall K."/>
            <person name="Ormond D."/>
            <person name="Quail M.A."/>
            <person name="Rabbinowitsch E."/>
            <person name="Rutherford K.M."/>
            <person name="Sanders M."/>
            <person name="Sharp S."/>
            <person name="Simmonds M."/>
            <person name="Stevens K."/>
            <person name="Whitehead S."/>
            <person name="Barrell B.G."/>
            <person name="Spratt B.G."/>
            <person name="Parkhill J."/>
        </authorList>
    </citation>
    <scope>NUCLEOTIDE SEQUENCE [LARGE SCALE GENOMIC DNA]</scope>
    <source>
        <strain>MSSA476</strain>
    </source>
</reference>
<sequence>MVQCLVVDDDPRILNYIASHLQTEHIDAYTQPSGEAALKLLEKQRVDIAVVDIMMDGMDGFQLCNTLKNDYDIPVIMLTARDALSDKERAFISGTDDYVTKPFEVKELIFRIRAVLRRYNINSNSEMTIGNLTLNQSYLELQVSNKTMTLPNKEFQLLFMLAARPKQIFTREQIIEKIWGYDYEGDERTVDVHIKRLRQRLKKLNATLTIETVRGQGYKVENHV</sequence>
<feature type="chain" id="PRO_0000331324" description="Heme response regulator HssR">
    <location>
        <begin position="1"/>
        <end position="224"/>
    </location>
</feature>
<feature type="domain" description="Response regulatory" evidence="2">
    <location>
        <begin position="3"/>
        <end position="116"/>
    </location>
</feature>
<feature type="DNA-binding region" description="OmpR/PhoB-type" evidence="3">
    <location>
        <begin position="124"/>
        <end position="222"/>
    </location>
</feature>
<feature type="modified residue" description="4-aspartylphosphate" evidence="2">
    <location>
        <position position="52"/>
    </location>
</feature>
<evidence type="ECO:0000250" key="1"/>
<evidence type="ECO:0000255" key="2">
    <source>
        <dbReference type="PROSITE-ProRule" id="PRU00169"/>
    </source>
</evidence>
<evidence type="ECO:0000255" key="3">
    <source>
        <dbReference type="PROSITE-ProRule" id="PRU01091"/>
    </source>
</evidence>
<evidence type="ECO:0000305" key="4"/>
<comment type="function">
    <text evidence="1">Member of the two-component regulatory system HssS/HssR involved in intracellular heme homeostasis and tempering of staphylococcal virulence. Phosphorylated HssR binds to a direct repeat sequence within hrtAB promoter and activates the expression of hrtAB, an efflux pump, in response to extracellular heme, hemin, hemoglobin or blood (By similarity).</text>
</comment>
<comment type="subcellular location">
    <subcellularLocation>
        <location evidence="4">Cytoplasm</location>
    </subcellularLocation>
</comment>
<comment type="PTM">
    <text evidence="1">Phosphorylated by HssS.</text>
</comment>
<organism>
    <name type="scientific">Staphylococcus aureus (strain MSSA476)</name>
    <dbReference type="NCBI Taxonomy" id="282459"/>
    <lineage>
        <taxon>Bacteria</taxon>
        <taxon>Bacillati</taxon>
        <taxon>Bacillota</taxon>
        <taxon>Bacilli</taxon>
        <taxon>Bacillales</taxon>
        <taxon>Staphylococcaceae</taxon>
        <taxon>Staphylococcus</taxon>
    </lineage>
</organism>
<dbReference type="EMBL" id="BX571857">
    <property type="protein sequence ID" value="CAG44065.1"/>
    <property type="molecule type" value="Genomic_DNA"/>
</dbReference>
<dbReference type="RefSeq" id="WP_000249497.1">
    <property type="nucleotide sequence ID" value="NC_002953.3"/>
</dbReference>
<dbReference type="SMR" id="Q6G6V9"/>
<dbReference type="KEGG" id="sas:SAS2252"/>
<dbReference type="HOGENOM" id="CLU_000445_30_3_9"/>
<dbReference type="GO" id="GO:0005829">
    <property type="term" value="C:cytosol"/>
    <property type="evidence" value="ECO:0007669"/>
    <property type="project" value="TreeGrafter"/>
</dbReference>
<dbReference type="GO" id="GO:0032993">
    <property type="term" value="C:protein-DNA complex"/>
    <property type="evidence" value="ECO:0007669"/>
    <property type="project" value="TreeGrafter"/>
</dbReference>
<dbReference type="GO" id="GO:0000156">
    <property type="term" value="F:phosphorelay response regulator activity"/>
    <property type="evidence" value="ECO:0007669"/>
    <property type="project" value="TreeGrafter"/>
</dbReference>
<dbReference type="GO" id="GO:0000976">
    <property type="term" value="F:transcription cis-regulatory region binding"/>
    <property type="evidence" value="ECO:0007669"/>
    <property type="project" value="TreeGrafter"/>
</dbReference>
<dbReference type="GO" id="GO:0006355">
    <property type="term" value="P:regulation of DNA-templated transcription"/>
    <property type="evidence" value="ECO:0007669"/>
    <property type="project" value="InterPro"/>
</dbReference>
<dbReference type="CDD" id="cd17574">
    <property type="entry name" value="REC_OmpR"/>
    <property type="match status" value="1"/>
</dbReference>
<dbReference type="CDD" id="cd00383">
    <property type="entry name" value="trans_reg_C"/>
    <property type="match status" value="1"/>
</dbReference>
<dbReference type="FunFam" id="1.10.10.10:FF:000018">
    <property type="entry name" value="DNA-binding response regulator ResD"/>
    <property type="match status" value="1"/>
</dbReference>
<dbReference type="Gene3D" id="3.40.50.2300">
    <property type="match status" value="1"/>
</dbReference>
<dbReference type="Gene3D" id="6.10.250.690">
    <property type="match status" value="1"/>
</dbReference>
<dbReference type="Gene3D" id="1.10.10.10">
    <property type="entry name" value="Winged helix-like DNA-binding domain superfamily/Winged helix DNA-binding domain"/>
    <property type="match status" value="1"/>
</dbReference>
<dbReference type="InterPro" id="IPR011006">
    <property type="entry name" value="CheY-like_superfamily"/>
</dbReference>
<dbReference type="InterPro" id="IPR001867">
    <property type="entry name" value="OmpR/PhoB-type_DNA-bd"/>
</dbReference>
<dbReference type="InterPro" id="IPR001789">
    <property type="entry name" value="Sig_transdc_resp-reg_receiver"/>
</dbReference>
<dbReference type="InterPro" id="IPR039420">
    <property type="entry name" value="WalR-like"/>
</dbReference>
<dbReference type="InterPro" id="IPR036388">
    <property type="entry name" value="WH-like_DNA-bd_sf"/>
</dbReference>
<dbReference type="PANTHER" id="PTHR48111:SF49">
    <property type="entry name" value="HEME RESPONSE REGULATOR HSSR"/>
    <property type="match status" value="1"/>
</dbReference>
<dbReference type="PANTHER" id="PTHR48111">
    <property type="entry name" value="REGULATOR OF RPOS"/>
    <property type="match status" value="1"/>
</dbReference>
<dbReference type="Pfam" id="PF00072">
    <property type="entry name" value="Response_reg"/>
    <property type="match status" value="1"/>
</dbReference>
<dbReference type="Pfam" id="PF00486">
    <property type="entry name" value="Trans_reg_C"/>
    <property type="match status" value="1"/>
</dbReference>
<dbReference type="SMART" id="SM00448">
    <property type="entry name" value="REC"/>
    <property type="match status" value="1"/>
</dbReference>
<dbReference type="SMART" id="SM00862">
    <property type="entry name" value="Trans_reg_C"/>
    <property type="match status" value="1"/>
</dbReference>
<dbReference type="SUPFAM" id="SSF52172">
    <property type="entry name" value="CheY-like"/>
    <property type="match status" value="1"/>
</dbReference>
<dbReference type="PROSITE" id="PS51755">
    <property type="entry name" value="OMPR_PHOB"/>
    <property type="match status" value="1"/>
</dbReference>
<dbReference type="PROSITE" id="PS50110">
    <property type="entry name" value="RESPONSE_REGULATORY"/>
    <property type="match status" value="1"/>
</dbReference>
<proteinExistence type="inferred from homology"/>
<protein>
    <recommendedName>
        <fullName>Heme response regulator HssR</fullName>
    </recommendedName>
</protein>